<dbReference type="EMBL" id="CU928160">
    <property type="protein sequence ID" value="CAQ99408.1"/>
    <property type="molecule type" value="Genomic_DNA"/>
</dbReference>
<dbReference type="RefSeq" id="WP_001090850.1">
    <property type="nucleotide sequence ID" value="NC_011741.1"/>
</dbReference>
<dbReference type="SMR" id="B7M7M0"/>
<dbReference type="KEGG" id="ecr:ECIAI1_2568"/>
<dbReference type="HOGENOM" id="CLU_047530_3_1_6"/>
<dbReference type="GO" id="GO:0005886">
    <property type="term" value="C:plasma membrane"/>
    <property type="evidence" value="ECO:0007669"/>
    <property type="project" value="UniProtKB-SubCell"/>
</dbReference>
<dbReference type="GO" id="GO:0003677">
    <property type="term" value="F:DNA binding"/>
    <property type="evidence" value="ECO:0007669"/>
    <property type="project" value="UniProtKB-KW"/>
</dbReference>
<dbReference type="GO" id="GO:0008360">
    <property type="term" value="P:regulation of cell shape"/>
    <property type="evidence" value="ECO:0007669"/>
    <property type="project" value="UniProtKB-UniRule"/>
</dbReference>
<dbReference type="CDD" id="cd00093">
    <property type="entry name" value="HTH_XRE"/>
    <property type="match status" value="1"/>
</dbReference>
<dbReference type="FunFam" id="1.10.260.40:FF:000014">
    <property type="entry name" value="Cytoskeleton protein RodZ"/>
    <property type="match status" value="1"/>
</dbReference>
<dbReference type="Gene3D" id="1.10.260.40">
    <property type="entry name" value="lambda repressor-like DNA-binding domains"/>
    <property type="match status" value="1"/>
</dbReference>
<dbReference type="HAMAP" id="MF_02017">
    <property type="entry name" value="RodZ"/>
    <property type="match status" value="1"/>
</dbReference>
<dbReference type="InterPro" id="IPR050400">
    <property type="entry name" value="Bact_Cytoskel_RodZ"/>
</dbReference>
<dbReference type="InterPro" id="IPR001387">
    <property type="entry name" value="Cro/C1-type_HTH"/>
</dbReference>
<dbReference type="InterPro" id="IPR010982">
    <property type="entry name" value="Lambda_DNA-bd_dom_sf"/>
</dbReference>
<dbReference type="InterPro" id="IPR023690">
    <property type="entry name" value="RodZ"/>
</dbReference>
<dbReference type="InterPro" id="IPR025194">
    <property type="entry name" value="RodZ-like_C"/>
</dbReference>
<dbReference type="NCBIfam" id="NF008109">
    <property type="entry name" value="PRK10856.1"/>
    <property type="match status" value="1"/>
</dbReference>
<dbReference type="PANTHER" id="PTHR34475">
    <property type="match status" value="1"/>
</dbReference>
<dbReference type="PANTHER" id="PTHR34475:SF1">
    <property type="entry name" value="CYTOSKELETON PROTEIN RODZ"/>
    <property type="match status" value="1"/>
</dbReference>
<dbReference type="Pfam" id="PF13413">
    <property type="entry name" value="HTH_25"/>
    <property type="match status" value="1"/>
</dbReference>
<dbReference type="Pfam" id="PF13464">
    <property type="entry name" value="RodZ_C"/>
    <property type="match status" value="1"/>
</dbReference>
<dbReference type="SMART" id="SM00530">
    <property type="entry name" value="HTH_XRE"/>
    <property type="match status" value="1"/>
</dbReference>
<dbReference type="SUPFAM" id="SSF47413">
    <property type="entry name" value="lambda repressor-like DNA-binding domains"/>
    <property type="match status" value="1"/>
</dbReference>
<dbReference type="PROSITE" id="PS50943">
    <property type="entry name" value="HTH_CROC1"/>
    <property type="match status" value="1"/>
</dbReference>
<accession>B7M7M0</accession>
<comment type="function">
    <text evidence="1">Cytoskeletal protein that is involved in cell-shape control through regulation of the length of the long axis.</text>
</comment>
<comment type="subcellular location">
    <subcellularLocation>
        <location evidence="1">Cell inner membrane</location>
        <topology evidence="1">Single-pass type II membrane protein</topology>
    </subcellularLocation>
    <text evidence="1">Forms helical filaments along the long axis of the cell.</text>
</comment>
<comment type="domain">
    <text evidence="1">The helix-turn-helix (HTH) motif in the cytoplasmic domain of the N-terminus is involved in the formation of spirals to maintain the rigid rod shape. As this protein is anchored in the cytoplasmic membrane, the HTH motif may contribute to protein-protein interactions to form the RodZ helix, which is localized beneath the cytoplasmic membrane. The C-terminal domain may be critical for determination of the rod shape by probably interacting with enzymes required for synthesis of the peptidoglycan layer, including PBPs in the periplasm.</text>
</comment>
<comment type="similarity">
    <text evidence="1">Belongs to the RodZ family.</text>
</comment>
<proteinExistence type="inferred from homology"/>
<keyword id="KW-0997">Cell inner membrane</keyword>
<keyword id="KW-1003">Cell membrane</keyword>
<keyword id="KW-0133">Cell shape</keyword>
<keyword id="KW-0238">DNA-binding</keyword>
<keyword id="KW-0472">Membrane</keyword>
<keyword id="KW-0735">Signal-anchor</keyword>
<keyword id="KW-0812">Transmembrane</keyword>
<keyword id="KW-1133">Transmembrane helix</keyword>
<sequence>MNTEATHDQNEALTTGARLRNAREQLGLSQQAVAERLCLKVSTVRDIEEDKAPADLASTFLRGYIRSYARLVHIPEEELLPGLEKQAPLRAAKVAPMQSFSLGKRRKKRDGWLMTFTWLVLFVVIGLSGAWWWQDHKAQQEEITTMADQSSAELSSNSEQGQSVPLNTSTTTDPATTSTPPASVDTTATNTQTPAVTAPAPAVDPQQNAVVSPSQANVDTAATPAPTATTTPDGAAPLPTDQAGVTTPAADPNALVMNFTADCWLEVTDATGKKLFSGMQRKDGNLNLTGQAPYKLKIGAPAAVQIQYQGKPVDLSRFIRTNQVARLTLNAEQSPAQ</sequence>
<evidence type="ECO:0000255" key="1">
    <source>
        <dbReference type="HAMAP-Rule" id="MF_02017"/>
    </source>
</evidence>
<evidence type="ECO:0000256" key="2">
    <source>
        <dbReference type="SAM" id="MobiDB-lite"/>
    </source>
</evidence>
<organism>
    <name type="scientific">Escherichia coli O8 (strain IAI1)</name>
    <dbReference type="NCBI Taxonomy" id="585034"/>
    <lineage>
        <taxon>Bacteria</taxon>
        <taxon>Pseudomonadati</taxon>
        <taxon>Pseudomonadota</taxon>
        <taxon>Gammaproteobacteria</taxon>
        <taxon>Enterobacterales</taxon>
        <taxon>Enterobacteriaceae</taxon>
        <taxon>Escherichia</taxon>
    </lineage>
</organism>
<name>RODZ_ECO8A</name>
<protein>
    <recommendedName>
        <fullName evidence="1">Cytoskeleton protein RodZ</fullName>
    </recommendedName>
</protein>
<feature type="chain" id="PRO_1000189541" description="Cytoskeleton protein RodZ">
    <location>
        <begin position="1"/>
        <end position="337"/>
    </location>
</feature>
<feature type="topological domain" description="Cytoplasmic" evidence="1">
    <location>
        <begin position="1"/>
        <end position="111"/>
    </location>
</feature>
<feature type="transmembrane region" description="Helical; Signal-anchor for type II membrane protein" evidence="1">
    <location>
        <begin position="112"/>
        <end position="132"/>
    </location>
</feature>
<feature type="topological domain" description="Periplasmic" evidence="1">
    <location>
        <begin position="133"/>
        <end position="337"/>
    </location>
</feature>
<feature type="domain" description="HTH cro/C1-type" evidence="1">
    <location>
        <begin position="19"/>
        <end position="71"/>
    </location>
</feature>
<feature type="DNA-binding region" description="H-T-H motif" evidence="1">
    <location>
        <begin position="30"/>
        <end position="49"/>
    </location>
</feature>
<feature type="region of interest" description="Disordered" evidence="2">
    <location>
        <begin position="145"/>
        <end position="237"/>
    </location>
</feature>
<feature type="compositionally biased region" description="Polar residues" evidence="2">
    <location>
        <begin position="145"/>
        <end position="167"/>
    </location>
</feature>
<feature type="compositionally biased region" description="Low complexity" evidence="2">
    <location>
        <begin position="168"/>
        <end position="207"/>
    </location>
</feature>
<feature type="compositionally biased region" description="Polar residues" evidence="2">
    <location>
        <begin position="208"/>
        <end position="218"/>
    </location>
</feature>
<feature type="compositionally biased region" description="Low complexity" evidence="2">
    <location>
        <begin position="219"/>
        <end position="237"/>
    </location>
</feature>
<reference key="1">
    <citation type="journal article" date="2009" name="PLoS Genet.">
        <title>Organised genome dynamics in the Escherichia coli species results in highly diverse adaptive paths.</title>
        <authorList>
            <person name="Touchon M."/>
            <person name="Hoede C."/>
            <person name="Tenaillon O."/>
            <person name="Barbe V."/>
            <person name="Baeriswyl S."/>
            <person name="Bidet P."/>
            <person name="Bingen E."/>
            <person name="Bonacorsi S."/>
            <person name="Bouchier C."/>
            <person name="Bouvet O."/>
            <person name="Calteau A."/>
            <person name="Chiapello H."/>
            <person name="Clermont O."/>
            <person name="Cruveiller S."/>
            <person name="Danchin A."/>
            <person name="Diard M."/>
            <person name="Dossat C."/>
            <person name="Karoui M.E."/>
            <person name="Frapy E."/>
            <person name="Garry L."/>
            <person name="Ghigo J.M."/>
            <person name="Gilles A.M."/>
            <person name="Johnson J."/>
            <person name="Le Bouguenec C."/>
            <person name="Lescat M."/>
            <person name="Mangenot S."/>
            <person name="Martinez-Jehanne V."/>
            <person name="Matic I."/>
            <person name="Nassif X."/>
            <person name="Oztas S."/>
            <person name="Petit M.A."/>
            <person name="Pichon C."/>
            <person name="Rouy Z."/>
            <person name="Ruf C.S."/>
            <person name="Schneider D."/>
            <person name="Tourret J."/>
            <person name="Vacherie B."/>
            <person name="Vallenet D."/>
            <person name="Medigue C."/>
            <person name="Rocha E.P.C."/>
            <person name="Denamur E."/>
        </authorList>
    </citation>
    <scope>NUCLEOTIDE SEQUENCE [LARGE SCALE GENOMIC DNA]</scope>
    <source>
        <strain>IAI1</strain>
    </source>
</reference>
<gene>
    <name evidence="1" type="primary">rodZ</name>
    <name type="ordered locus">ECIAI1_2568</name>
</gene>